<dbReference type="EMBL" id="GU292901">
    <property type="protein sequence ID" value="ADB56717.1"/>
    <property type="molecule type" value="mRNA"/>
</dbReference>
<dbReference type="SMR" id="D2Y224"/>
<dbReference type="ArachnoServer" id="AS001708">
    <property type="toxin name" value="U4-theraphotoxin-Hhn1e"/>
</dbReference>
<dbReference type="GO" id="GO:0005576">
    <property type="term" value="C:extracellular region"/>
    <property type="evidence" value="ECO:0007669"/>
    <property type="project" value="UniProtKB-SubCell"/>
</dbReference>
<dbReference type="GO" id="GO:0035792">
    <property type="term" value="C:host cell postsynaptic membrane"/>
    <property type="evidence" value="ECO:0007669"/>
    <property type="project" value="UniProtKB-KW"/>
</dbReference>
<dbReference type="GO" id="GO:0090729">
    <property type="term" value="F:toxin activity"/>
    <property type="evidence" value="ECO:0007669"/>
    <property type="project" value="UniProtKB-KW"/>
</dbReference>
<dbReference type="InterPro" id="IPR012625">
    <property type="entry name" value="Hwtx-2-like"/>
</dbReference>
<dbReference type="Pfam" id="PF08089">
    <property type="entry name" value="Toxin_20"/>
    <property type="match status" value="1"/>
</dbReference>
<dbReference type="SUPFAM" id="SSF57059">
    <property type="entry name" value="omega toxin-like"/>
    <property type="match status" value="1"/>
</dbReference>
<dbReference type="PROSITE" id="PS60022">
    <property type="entry name" value="HWTX_2"/>
    <property type="match status" value="1"/>
</dbReference>
<feature type="signal peptide" evidence="2">
    <location>
        <begin position="1"/>
        <end position="22"/>
    </location>
</feature>
<feature type="propeptide" id="PRO_0000400793" evidence="1">
    <location>
        <begin position="23"/>
        <end position="48"/>
    </location>
</feature>
<feature type="peptide" id="PRO_0000400794" description="U4-theraphotoxin-Hhn1e">
    <location>
        <begin position="49"/>
        <end position="85"/>
    </location>
</feature>
<feature type="disulfide bond" evidence="1">
    <location>
        <begin position="52"/>
        <end position="66"/>
    </location>
</feature>
<feature type="disulfide bond" evidence="1">
    <location>
        <begin position="56"/>
        <end position="77"/>
    </location>
</feature>
<feature type="disulfide bond" evidence="1">
    <location>
        <begin position="71"/>
        <end position="82"/>
    </location>
</feature>
<protein>
    <recommendedName>
        <fullName>U4-theraphotoxin-Hhn1e</fullName>
        <shortName>U4-TRTX-Hhn1e</shortName>
    </recommendedName>
    <alternativeName>
        <fullName>Hainantoxin-II-13</fullName>
        <shortName>HNTX-II-13</shortName>
    </alternativeName>
</protein>
<keyword id="KW-1015">Disulfide bond</keyword>
<keyword id="KW-0528">Neurotoxin</keyword>
<keyword id="KW-0629">Postsynaptic neurotoxin</keyword>
<keyword id="KW-0964">Secreted</keyword>
<keyword id="KW-0732">Signal</keyword>
<keyword id="KW-0800">Toxin</keyword>
<accession>D2Y224</accession>
<organism>
    <name type="scientific">Cyriopagopus hainanus</name>
    <name type="common">Chinese bird spider</name>
    <name type="synonym">Haplopelma hainanum</name>
    <dbReference type="NCBI Taxonomy" id="209901"/>
    <lineage>
        <taxon>Eukaryota</taxon>
        <taxon>Metazoa</taxon>
        <taxon>Ecdysozoa</taxon>
        <taxon>Arthropoda</taxon>
        <taxon>Chelicerata</taxon>
        <taxon>Arachnida</taxon>
        <taxon>Araneae</taxon>
        <taxon>Mygalomorphae</taxon>
        <taxon>Theraphosidae</taxon>
        <taxon>Haplopelma</taxon>
    </lineage>
</organism>
<evidence type="ECO:0000250" key="1"/>
<evidence type="ECO:0000255" key="2"/>
<evidence type="ECO:0000305" key="3"/>
<reference key="1">
    <citation type="journal article" date="2010" name="J. Proteome Res.">
        <title>Molecular diversification of peptide toxins from the tarantula Haplopelma hainanum (Ornithoctonus hainana) venom based on transcriptomic, peptidomic, and genomic analyses.</title>
        <authorList>
            <person name="Tang X."/>
            <person name="Zhang Y."/>
            <person name="Hu W."/>
            <person name="Xu D."/>
            <person name="Tao H."/>
            <person name="Yang X."/>
            <person name="Li Y."/>
            <person name="Jiang L."/>
            <person name="Liang S."/>
        </authorList>
    </citation>
    <scope>NUCLEOTIDE SEQUENCE [LARGE SCALE MRNA]</scope>
    <source>
        <tissue>Venom gland</tissue>
    </source>
</reference>
<comment type="function">
    <text evidence="1">Postsynaptic neurotoxin.</text>
</comment>
<comment type="subcellular location">
    <subcellularLocation>
        <location evidence="1">Secreted</location>
    </subcellularLocation>
</comment>
<comment type="tissue specificity">
    <text>Expressed by the venom gland.</text>
</comment>
<comment type="similarity">
    <text evidence="3">Belongs to the neurotoxin 12 (Hwtx-2) family. 02 (Hwtx-2) subfamily.</text>
</comment>
<proteinExistence type="evidence at transcript level"/>
<sequence length="85" mass="9370">MKVTLIAILTCAAVLVLHTTAAEELEAESQLMEVGMPDTELAAVDEERLFECSVSCEIEKEGNKDCKKKKCKGGWKCKFNMCVKA</sequence>
<name>H2M01_CYRHA</name>